<proteinExistence type="inferred from homology"/>
<sequence>MKPDAHHVKQFLLRLQDDICQKLSAVDGANFVEDSWRREAGGGGRSRVLRNGGIFEQAGVNFSHVHGDAMPASATAHRPELAGRSFEAMGVSLVVHPHNPYIPTSHANVRFFIAEKPGADPVWWFGGGLDLTPYYGFEEDAVHWHRTARDLCQPFGDNVYPRYKKWCDDYFFLKHRNEQRGIGGLFFDDLNTPDFDHCFAFMQAVGNGYTEAYLPIVERRKAMVWGERERNFQLYRRGRYVEFNLVWDRGTLFGLQTGGRTESILMSMPPLVRWEYDWQPEAGSPEAALSEFIQVRDWI</sequence>
<gene>
    <name evidence="1" type="primary">hemF</name>
    <name type="ordered locus">SEN2432</name>
</gene>
<dbReference type="EC" id="1.3.3.3" evidence="1"/>
<dbReference type="EMBL" id="AM933172">
    <property type="protein sequence ID" value="CAR34017.1"/>
    <property type="molecule type" value="Genomic_DNA"/>
</dbReference>
<dbReference type="RefSeq" id="WP_000801333.1">
    <property type="nucleotide sequence ID" value="NC_011294.1"/>
</dbReference>
<dbReference type="SMR" id="B5R4G0"/>
<dbReference type="KEGG" id="set:SEN2432"/>
<dbReference type="HOGENOM" id="CLU_026169_0_1_6"/>
<dbReference type="UniPathway" id="UPA00251">
    <property type="reaction ID" value="UER00322"/>
</dbReference>
<dbReference type="Proteomes" id="UP000000613">
    <property type="component" value="Chromosome"/>
</dbReference>
<dbReference type="GO" id="GO:0005737">
    <property type="term" value="C:cytoplasm"/>
    <property type="evidence" value="ECO:0007669"/>
    <property type="project" value="UniProtKB-SubCell"/>
</dbReference>
<dbReference type="GO" id="GO:0004109">
    <property type="term" value="F:coproporphyrinogen oxidase activity"/>
    <property type="evidence" value="ECO:0007669"/>
    <property type="project" value="UniProtKB-UniRule"/>
</dbReference>
<dbReference type="GO" id="GO:0046872">
    <property type="term" value="F:metal ion binding"/>
    <property type="evidence" value="ECO:0007669"/>
    <property type="project" value="UniProtKB-KW"/>
</dbReference>
<dbReference type="GO" id="GO:0042803">
    <property type="term" value="F:protein homodimerization activity"/>
    <property type="evidence" value="ECO:0000250"/>
    <property type="project" value="UniProtKB"/>
</dbReference>
<dbReference type="GO" id="GO:0006782">
    <property type="term" value="P:protoporphyrinogen IX biosynthetic process"/>
    <property type="evidence" value="ECO:0007669"/>
    <property type="project" value="UniProtKB-UniRule"/>
</dbReference>
<dbReference type="FunFam" id="3.40.1500.10:FF:000001">
    <property type="entry name" value="Oxygen-dependent coproporphyrinogen-III oxidase"/>
    <property type="match status" value="1"/>
</dbReference>
<dbReference type="Gene3D" id="3.40.1500.10">
    <property type="entry name" value="Coproporphyrinogen III oxidase, aerobic"/>
    <property type="match status" value="1"/>
</dbReference>
<dbReference type="HAMAP" id="MF_00333">
    <property type="entry name" value="Coprogen_oxidas"/>
    <property type="match status" value="1"/>
</dbReference>
<dbReference type="InterPro" id="IPR001260">
    <property type="entry name" value="Coprogen_oxidase_aer"/>
</dbReference>
<dbReference type="InterPro" id="IPR036406">
    <property type="entry name" value="Coprogen_oxidase_aer_sf"/>
</dbReference>
<dbReference type="InterPro" id="IPR018375">
    <property type="entry name" value="Coprogen_oxidase_CS"/>
</dbReference>
<dbReference type="NCBIfam" id="NF003727">
    <property type="entry name" value="PRK05330.1"/>
    <property type="match status" value="1"/>
</dbReference>
<dbReference type="PANTHER" id="PTHR10755">
    <property type="entry name" value="COPROPORPHYRINOGEN III OXIDASE, MITOCHONDRIAL"/>
    <property type="match status" value="1"/>
</dbReference>
<dbReference type="PANTHER" id="PTHR10755:SF0">
    <property type="entry name" value="OXYGEN-DEPENDENT COPROPORPHYRINOGEN-III OXIDASE, MITOCHONDRIAL"/>
    <property type="match status" value="1"/>
</dbReference>
<dbReference type="Pfam" id="PF01218">
    <property type="entry name" value="Coprogen_oxidas"/>
    <property type="match status" value="1"/>
</dbReference>
<dbReference type="PIRSF" id="PIRSF000166">
    <property type="entry name" value="Coproporphyri_ox"/>
    <property type="match status" value="1"/>
</dbReference>
<dbReference type="PRINTS" id="PR00073">
    <property type="entry name" value="COPRGNOXDASE"/>
</dbReference>
<dbReference type="SUPFAM" id="SSF102886">
    <property type="entry name" value="Coproporphyrinogen III oxidase"/>
    <property type="match status" value="1"/>
</dbReference>
<dbReference type="PROSITE" id="PS01021">
    <property type="entry name" value="COPROGEN_OXIDASE"/>
    <property type="match status" value="1"/>
</dbReference>
<reference key="1">
    <citation type="journal article" date="2008" name="Genome Res.">
        <title>Comparative genome analysis of Salmonella enteritidis PT4 and Salmonella gallinarum 287/91 provides insights into evolutionary and host adaptation pathways.</title>
        <authorList>
            <person name="Thomson N.R."/>
            <person name="Clayton D.J."/>
            <person name="Windhorst D."/>
            <person name="Vernikos G."/>
            <person name="Davidson S."/>
            <person name="Churcher C."/>
            <person name="Quail M.A."/>
            <person name="Stevens M."/>
            <person name="Jones M.A."/>
            <person name="Watson M."/>
            <person name="Barron A."/>
            <person name="Layton A."/>
            <person name="Pickard D."/>
            <person name="Kingsley R.A."/>
            <person name="Bignell A."/>
            <person name="Clark L."/>
            <person name="Harris B."/>
            <person name="Ormond D."/>
            <person name="Abdellah Z."/>
            <person name="Brooks K."/>
            <person name="Cherevach I."/>
            <person name="Chillingworth T."/>
            <person name="Woodward J."/>
            <person name="Norberczak H."/>
            <person name="Lord A."/>
            <person name="Arrowsmith C."/>
            <person name="Jagels K."/>
            <person name="Moule S."/>
            <person name="Mungall K."/>
            <person name="Saunders M."/>
            <person name="Whitehead S."/>
            <person name="Chabalgoity J.A."/>
            <person name="Maskell D."/>
            <person name="Humphreys T."/>
            <person name="Roberts M."/>
            <person name="Barrow P.A."/>
            <person name="Dougan G."/>
            <person name="Parkhill J."/>
        </authorList>
    </citation>
    <scope>NUCLEOTIDE SEQUENCE [LARGE SCALE GENOMIC DNA]</scope>
    <source>
        <strain>P125109</strain>
    </source>
</reference>
<feature type="chain" id="PRO_1000119820" description="Oxygen-dependent coproporphyrinogen-III oxidase">
    <location>
        <begin position="1"/>
        <end position="299"/>
    </location>
</feature>
<feature type="region of interest" description="Important for dimerization" evidence="1">
    <location>
        <begin position="240"/>
        <end position="275"/>
    </location>
</feature>
<feature type="active site" description="Proton donor" evidence="1">
    <location>
        <position position="106"/>
    </location>
</feature>
<feature type="binding site" evidence="1">
    <location>
        <position position="92"/>
    </location>
    <ligand>
        <name>substrate</name>
    </ligand>
</feature>
<feature type="binding site" evidence="1">
    <location>
        <position position="96"/>
    </location>
    <ligand>
        <name>a divalent metal cation</name>
        <dbReference type="ChEBI" id="CHEBI:60240"/>
    </ligand>
</feature>
<feature type="binding site" evidence="1">
    <location>
        <position position="106"/>
    </location>
    <ligand>
        <name>a divalent metal cation</name>
        <dbReference type="ChEBI" id="CHEBI:60240"/>
    </ligand>
</feature>
<feature type="binding site" evidence="1">
    <location>
        <begin position="108"/>
        <end position="110"/>
    </location>
    <ligand>
        <name>substrate</name>
    </ligand>
</feature>
<feature type="binding site" evidence="1">
    <location>
        <position position="145"/>
    </location>
    <ligand>
        <name>a divalent metal cation</name>
        <dbReference type="ChEBI" id="CHEBI:60240"/>
    </ligand>
</feature>
<feature type="binding site" evidence="1">
    <location>
        <position position="175"/>
    </location>
    <ligand>
        <name>a divalent metal cation</name>
        <dbReference type="ChEBI" id="CHEBI:60240"/>
    </ligand>
</feature>
<feature type="binding site" evidence="1">
    <location>
        <begin position="258"/>
        <end position="260"/>
    </location>
    <ligand>
        <name>substrate</name>
    </ligand>
</feature>
<feature type="site" description="Important for dimerization" evidence="1">
    <location>
        <position position="175"/>
    </location>
</feature>
<comment type="function">
    <text evidence="1">Involved in the heme biosynthesis. Catalyzes the aerobic oxidative decarboxylation of propionate groups of rings A and B of coproporphyrinogen-III to yield the vinyl groups in protoporphyrinogen-IX.</text>
</comment>
<comment type="catalytic activity">
    <reaction evidence="1">
        <text>coproporphyrinogen III + O2 + 2 H(+) = protoporphyrinogen IX + 2 CO2 + 2 H2O</text>
        <dbReference type="Rhea" id="RHEA:18257"/>
        <dbReference type="ChEBI" id="CHEBI:15377"/>
        <dbReference type="ChEBI" id="CHEBI:15378"/>
        <dbReference type="ChEBI" id="CHEBI:15379"/>
        <dbReference type="ChEBI" id="CHEBI:16526"/>
        <dbReference type="ChEBI" id="CHEBI:57307"/>
        <dbReference type="ChEBI" id="CHEBI:57309"/>
        <dbReference type="EC" id="1.3.3.3"/>
    </reaction>
</comment>
<comment type="cofactor">
    <cofactor evidence="1">
        <name>a divalent metal cation</name>
        <dbReference type="ChEBI" id="CHEBI:60240"/>
    </cofactor>
</comment>
<comment type="pathway">
    <text evidence="1">Porphyrin-containing compound metabolism; protoporphyrin-IX biosynthesis; protoporphyrinogen-IX from coproporphyrinogen-III (O2 route): step 1/1.</text>
</comment>
<comment type="subunit">
    <text evidence="1">Homodimer.</text>
</comment>
<comment type="subcellular location">
    <subcellularLocation>
        <location evidence="1">Cytoplasm</location>
    </subcellularLocation>
</comment>
<comment type="similarity">
    <text evidence="1">Belongs to the aerobic coproporphyrinogen-III oxidase family.</text>
</comment>
<organism>
    <name type="scientific">Salmonella enteritidis PT4 (strain P125109)</name>
    <dbReference type="NCBI Taxonomy" id="550537"/>
    <lineage>
        <taxon>Bacteria</taxon>
        <taxon>Pseudomonadati</taxon>
        <taxon>Pseudomonadota</taxon>
        <taxon>Gammaproteobacteria</taxon>
        <taxon>Enterobacterales</taxon>
        <taxon>Enterobacteriaceae</taxon>
        <taxon>Salmonella</taxon>
    </lineage>
</organism>
<protein>
    <recommendedName>
        <fullName evidence="1">Oxygen-dependent coproporphyrinogen-III oxidase</fullName>
        <shortName evidence="1">CPO</shortName>
        <shortName evidence="1">Coprogen oxidase</shortName>
        <shortName evidence="1">Coproporphyrinogenase</shortName>
        <ecNumber evidence="1">1.3.3.3</ecNumber>
    </recommendedName>
</protein>
<keyword id="KW-0963">Cytoplasm</keyword>
<keyword id="KW-0350">Heme biosynthesis</keyword>
<keyword id="KW-0479">Metal-binding</keyword>
<keyword id="KW-0560">Oxidoreductase</keyword>
<keyword id="KW-0627">Porphyrin biosynthesis</keyword>
<accession>B5R4G0</accession>
<name>HEM6_SALEP</name>
<evidence type="ECO:0000255" key="1">
    <source>
        <dbReference type="HAMAP-Rule" id="MF_00333"/>
    </source>
</evidence>